<gene>
    <name type="primary">efp</name>
    <name type="ordered locus">MG026</name>
</gene>
<evidence type="ECO:0000250" key="1"/>
<evidence type="ECO:0000305" key="2"/>
<feature type="chain" id="PRO_0000094283" description="Elongation factor P">
    <location>
        <begin position="1"/>
        <end position="190"/>
    </location>
</feature>
<keyword id="KW-0963">Cytoplasm</keyword>
<keyword id="KW-0251">Elongation factor</keyword>
<keyword id="KW-0648">Protein biosynthesis</keyword>
<keyword id="KW-1185">Reference proteome</keyword>
<name>EFP_MYCGE</name>
<organism>
    <name type="scientific">Mycoplasma genitalium (strain ATCC 33530 / DSM 19775 / NCTC 10195 / G37)</name>
    <name type="common">Mycoplasmoides genitalium</name>
    <dbReference type="NCBI Taxonomy" id="243273"/>
    <lineage>
        <taxon>Bacteria</taxon>
        <taxon>Bacillati</taxon>
        <taxon>Mycoplasmatota</taxon>
        <taxon>Mycoplasmoidales</taxon>
        <taxon>Mycoplasmoidaceae</taxon>
        <taxon>Mycoplasmoides</taxon>
    </lineage>
</organism>
<dbReference type="EMBL" id="L43967">
    <property type="protein sequence ID" value="AAC71242.1"/>
    <property type="molecule type" value="Genomic_DNA"/>
</dbReference>
<dbReference type="EMBL" id="U02253">
    <property type="protein sequence ID" value="AAD12518.1"/>
    <property type="molecule type" value="Genomic_DNA"/>
</dbReference>
<dbReference type="PIR" id="H64202">
    <property type="entry name" value="H64202"/>
</dbReference>
<dbReference type="RefSeq" id="WP_010869294.1">
    <property type="nucleotide sequence ID" value="NC_000908.2"/>
</dbReference>
<dbReference type="SMR" id="P47272"/>
<dbReference type="FunCoup" id="P47272">
    <property type="interactions" value="196"/>
</dbReference>
<dbReference type="STRING" id="243273.MG_026"/>
<dbReference type="GeneID" id="88282141"/>
<dbReference type="KEGG" id="mge:MG_026"/>
<dbReference type="eggNOG" id="COG0231">
    <property type="taxonomic scope" value="Bacteria"/>
</dbReference>
<dbReference type="HOGENOM" id="CLU_074944_2_1_14"/>
<dbReference type="InParanoid" id="P47272"/>
<dbReference type="OrthoDB" id="9801844at2"/>
<dbReference type="BioCyc" id="MGEN243273:G1GJ2-26-MONOMER"/>
<dbReference type="UniPathway" id="UPA00345"/>
<dbReference type="Proteomes" id="UP000000807">
    <property type="component" value="Chromosome"/>
</dbReference>
<dbReference type="GO" id="GO:0005737">
    <property type="term" value="C:cytoplasm"/>
    <property type="evidence" value="ECO:0000318"/>
    <property type="project" value="GO_Central"/>
</dbReference>
<dbReference type="GO" id="GO:0003746">
    <property type="term" value="F:translation elongation factor activity"/>
    <property type="evidence" value="ECO:0000318"/>
    <property type="project" value="GO_Central"/>
</dbReference>
<dbReference type="GO" id="GO:0043043">
    <property type="term" value="P:peptide biosynthetic process"/>
    <property type="evidence" value="ECO:0007669"/>
    <property type="project" value="InterPro"/>
</dbReference>
<dbReference type="CDD" id="cd04470">
    <property type="entry name" value="S1_EF-P_repeat_1"/>
    <property type="match status" value="1"/>
</dbReference>
<dbReference type="FunFam" id="2.40.50.140:FF:000004">
    <property type="entry name" value="Elongation factor P"/>
    <property type="match status" value="1"/>
</dbReference>
<dbReference type="FunFam" id="2.40.50.140:FF:000009">
    <property type="entry name" value="Elongation factor P"/>
    <property type="match status" value="1"/>
</dbReference>
<dbReference type="Gene3D" id="2.30.30.30">
    <property type="match status" value="1"/>
</dbReference>
<dbReference type="Gene3D" id="2.40.50.140">
    <property type="entry name" value="Nucleic acid-binding proteins"/>
    <property type="match status" value="2"/>
</dbReference>
<dbReference type="HAMAP" id="MF_00141">
    <property type="entry name" value="EF_P"/>
    <property type="match status" value="1"/>
</dbReference>
<dbReference type="InterPro" id="IPR015365">
    <property type="entry name" value="Elong-fact-P_C"/>
</dbReference>
<dbReference type="InterPro" id="IPR012340">
    <property type="entry name" value="NA-bd_OB-fold"/>
</dbReference>
<dbReference type="InterPro" id="IPR014722">
    <property type="entry name" value="Rib_uL2_dom2"/>
</dbReference>
<dbReference type="InterPro" id="IPR020599">
    <property type="entry name" value="Transl_elong_fac_P/YeiP"/>
</dbReference>
<dbReference type="InterPro" id="IPR013185">
    <property type="entry name" value="Transl_elong_KOW-like"/>
</dbReference>
<dbReference type="InterPro" id="IPR001059">
    <property type="entry name" value="Transl_elong_P/YeiP_cen"/>
</dbReference>
<dbReference type="InterPro" id="IPR013852">
    <property type="entry name" value="Transl_elong_P/YeiP_CS"/>
</dbReference>
<dbReference type="InterPro" id="IPR011768">
    <property type="entry name" value="Transl_elongation_fac_P"/>
</dbReference>
<dbReference type="InterPro" id="IPR008991">
    <property type="entry name" value="Translation_prot_SH3-like_sf"/>
</dbReference>
<dbReference type="NCBIfam" id="TIGR00038">
    <property type="entry name" value="efp"/>
    <property type="match status" value="1"/>
</dbReference>
<dbReference type="NCBIfam" id="NF001810">
    <property type="entry name" value="PRK00529.1"/>
    <property type="match status" value="1"/>
</dbReference>
<dbReference type="PANTHER" id="PTHR30053">
    <property type="entry name" value="ELONGATION FACTOR P"/>
    <property type="match status" value="1"/>
</dbReference>
<dbReference type="PANTHER" id="PTHR30053:SF12">
    <property type="entry name" value="ELONGATION FACTOR P (EF-P) FAMILY PROTEIN"/>
    <property type="match status" value="1"/>
</dbReference>
<dbReference type="Pfam" id="PF01132">
    <property type="entry name" value="EFP"/>
    <property type="match status" value="1"/>
</dbReference>
<dbReference type="Pfam" id="PF08207">
    <property type="entry name" value="EFP_N"/>
    <property type="match status" value="1"/>
</dbReference>
<dbReference type="Pfam" id="PF09285">
    <property type="entry name" value="Elong-fact-P_C"/>
    <property type="match status" value="1"/>
</dbReference>
<dbReference type="PIRSF" id="PIRSF005901">
    <property type="entry name" value="EF-P"/>
    <property type="match status" value="1"/>
</dbReference>
<dbReference type="SMART" id="SM01185">
    <property type="entry name" value="EFP"/>
    <property type="match status" value="1"/>
</dbReference>
<dbReference type="SMART" id="SM00841">
    <property type="entry name" value="Elong-fact-P_C"/>
    <property type="match status" value="1"/>
</dbReference>
<dbReference type="SUPFAM" id="SSF50249">
    <property type="entry name" value="Nucleic acid-binding proteins"/>
    <property type="match status" value="2"/>
</dbReference>
<dbReference type="SUPFAM" id="SSF50104">
    <property type="entry name" value="Translation proteins SH3-like domain"/>
    <property type="match status" value="1"/>
</dbReference>
<dbReference type="PROSITE" id="PS01275">
    <property type="entry name" value="EFP"/>
    <property type="match status" value="1"/>
</dbReference>
<sequence>MAEMIEAKNLRNGQTIFGPNKEILLVLENTFNKTAMRQGIVKTKVKNLRTGAIVWLEFTGDKLEQVIIDKKKMNFLYKDGNNFVFMDQKDYSQIEINEKKLEWEKNFITEEIEVTVITYQDEILGVNLPDLVPIEVEFAEDAIQGNTANMARKKARLVTGYELDVPQFINTGDKIVIATVDGNYRERFNK</sequence>
<accession>P47272</accession>
<comment type="function">
    <text evidence="1">Involved in peptide bond synthesis. Stimulates efficient translation and peptide-bond synthesis on native or reconstituted 70S ribosomes in vitro. Probably functions indirectly by altering the affinity of the ribosome for aminoacyl-tRNA, thus increasing their reactivity as acceptors for peptidyl transferase (By similarity).</text>
</comment>
<comment type="pathway">
    <text>Protein biosynthesis; polypeptide chain elongation.</text>
</comment>
<comment type="subcellular location">
    <subcellularLocation>
        <location evidence="1">Cytoplasm</location>
    </subcellularLocation>
</comment>
<comment type="similarity">
    <text evidence="2">Belongs to the elongation factor P family.</text>
</comment>
<proteinExistence type="inferred from homology"/>
<protein>
    <recommendedName>
        <fullName>Elongation factor P</fullName>
        <shortName>EF-P</shortName>
    </recommendedName>
</protein>
<reference key="1">
    <citation type="journal article" date="1995" name="Science">
        <title>The minimal gene complement of Mycoplasma genitalium.</title>
        <authorList>
            <person name="Fraser C.M."/>
            <person name="Gocayne J.D."/>
            <person name="White O."/>
            <person name="Adams M.D."/>
            <person name="Clayton R.A."/>
            <person name="Fleischmann R.D."/>
            <person name="Bult C.J."/>
            <person name="Kerlavage A.R."/>
            <person name="Sutton G.G."/>
            <person name="Kelley J.M."/>
            <person name="Fritchman J.L."/>
            <person name="Weidman J.F."/>
            <person name="Small K.V."/>
            <person name="Sandusky M."/>
            <person name="Fuhrmann J.L."/>
            <person name="Nguyen D.T."/>
            <person name="Utterback T.R."/>
            <person name="Saudek D.M."/>
            <person name="Phillips C.A."/>
            <person name="Merrick J.M."/>
            <person name="Tomb J.-F."/>
            <person name="Dougherty B.A."/>
            <person name="Bott K.F."/>
            <person name="Hu P.-C."/>
            <person name="Lucier T.S."/>
            <person name="Peterson S.N."/>
            <person name="Smith H.O."/>
            <person name="Hutchison C.A. III"/>
            <person name="Venter J.C."/>
        </authorList>
    </citation>
    <scope>NUCLEOTIDE SEQUENCE [LARGE SCALE GENOMIC DNA]</scope>
    <source>
        <strain>ATCC 33530 / DSM 19775 / NCTC 10195 / G37</strain>
    </source>
</reference>
<reference key="2">
    <citation type="journal article" date="1993" name="J. Bacteriol.">
        <title>A survey of the Mycoplasma genitalium genome by using random sequencing.</title>
        <authorList>
            <person name="Peterson S.N."/>
            <person name="Hu P.-C."/>
            <person name="Bott K.F."/>
            <person name="Hutchison C.A. III"/>
        </authorList>
    </citation>
    <scope>NUCLEOTIDE SEQUENCE [GENOMIC DNA] OF 1-87</scope>
    <source>
        <strain>ATCC 33530 / DSM 19775 / NCTC 10195 / G37</strain>
    </source>
</reference>